<dbReference type="EMBL" id="AY881012">
    <property type="protein sequence ID" value="AAX73253.1"/>
    <property type="molecule type" value="mRNA"/>
</dbReference>
<dbReference type="EMBL" id="BC116499">
    <property type="protein sequence ID" value="AAI16500.1"/>
    <property type="molecule type" value="mRNA"/>
</dbReference>
<dbReference type="RefSeq" id="NP_001018616.2">
    <property type="nucleotide sequence ID" value="NM_001020780.2"/>
</dbReference>
<dbReference type="STRING" id="7955.ENSDARP00000055008"/>
<dbReference type="PaxDb" id="7955-ENSDARP00000055008"/>
<dbReference type="GeneID" id="553947"/>
<dbReference type="KEGG" id="dre:553947"/>
<dbReference type="AGR" id="ZFIN:ZDB-GENE-050714-1"/>
<dbReference type="CTD" id="553947"/>
<dbReference type="ZFIN" id="ZDB-GENE-050714-1">
    <property type="gene designation" value="uncx4.1"/>
</dbReference>
<dbReference type="eggNOG" id="KOG0490">
    <property type="taxonomic scope" value="Eukaryota"/>
</dbReference>
<dbReference type="InParanoid" id="Q50D79"/>
<dbReference type="OrthoDB" id="6159439at2759"/>
<dbReference type="PhylomeDB" id="Q50D79"/>
<dbReference type="PRO" id="PR:Q50D79"/>
<dbReference type="Proteomes" id="UP000000437">
    <property type="component" value="Chromosome 1"/>
</dbReference>
<dbReference type="GO" id="GO:0005634">
    <property type="term" value="C:nucleus"/>
    <property type="evidence" value="ECO:0007669"/>
    <property type="project" value="UniProtKB-SubCell"/>
</dbReference>
<dbReference type="GO" id="GO:0000981">
    <property type="term" value="F:DNA-binding transcription factor activity, RNA polymerase II-specific"/>
    <property type="evidence" value="ECO:0007669"/>
    <property type="project" value="InterPro"/>
</dbReference>
<dbReference type="GO" id="GO:1990837">
    <property type="term" value="F:sequence-specific double-stranded DNA binding"/>
    <property type="evidence" value="ECO:0000318"/>
    <property type="project" value="GO_Central"/>
</dbReference>
<dbReference type="GO" id="GO:0030154">
    <property type="term" value="P:cell differentiation"/>
    <property type="evidence" value="ECO:0007669"/>
    <property type="project" value="UniProtKB-KW"/>
</dbReference>
<dbReference type="GO" id="GO:0007399">
    <property type="term" value="P:nervous system development"/>
    <property type="evidence" value="ECO:0007669"/>
    <property type="project" value="UniProtKB-KW"/>
</dbReference>
<dbReference type="GO" id="GO:0010468">
    <property type="term" value="P:regulation of gene expression"/>
    <property type="evidence" value="ECO:0000318"/>
    <property type="project" value="GO_Central"/>
</dbReference>
<dbReference type="CDD" id="cd00086">
    <property type="entry name" value="homeodomain"/>
    <property type="match status" value="1"/>
</dbReference>
<dbReference type="FunFam" id="1.10.10.60:FF:000057">
    <property type="entry name" value="Short stature homeobox 2"/>
    <property type="match status" value="1"/>
</dbReference>
<dbReference type="Gene3D" id="1.10.10.60">
    <property type="entry name" value="Homeodomain-like"/>
    <property type="match status" value="1"/>
</dbReference>
<dbReference type="InterPro" id="IPR001356">
    <property type="entry name" value="HD"/>
</dbReference>
<dbReference type="InterPro" id="IPR017970">
    <property type="entry name" value="Homeobox_CS"/>
</dbReference>
<dbReference type="InterPro" id="IPR009057">
    <property type="entry name" value="Homeodomain-like_sf"/>
</dbReference>
<dbReference type="PANTHER" id="PTHR46799">
    <property type="entry name" value="HOMEOBOX PROTEIN UNC-4 HOMOLOG"/>
    <property type="match status" value="1"/>
</dbReference>
<dbReference type="PANTHER" id="PTHR46799:SF1">
    <property type="entry name" value="HOMEOBOX PROTEIN UNC-4 HOMOLOG"/>
    <property type="match status" value="1"/>
</dbReference>
<dbReference type="Pfam" id="PF00046">
    <property type="entry name" value="Homeodomain"/>
    <property type="match status" value="1"/>
</dbReference>
<dbReference type="SMART" id="SM00389">
    <property type="entry name" value="HOX"/>
    <property type="match status" value="1"/>
</dbReference>
<dbReference type="SUPFAM" id="SSF46689">
    <property type="entry name" value="Homeodomain-like"/>
    <property type="match status" value="1"/>
</dbReference>
<dbReference type="PROSITE" id="PS00027">
    <property type="entry name" value="HOMEOBOX_1"/>
    <property type="match status" value="1"/>
</dbReference>
<dbReference type="PROSITE" id="PS50071">
    <property type="entry name" value="HOMEOBOX_2"/>
    <property type="match status" value="1"/>
</dbReference>
<accession>Q50D79</accession>
<accession>Q1JQ36</accession>
<organism>
    <name type="scientific">Danio rerio</name>
    <name type="common">Zebrafish</name>
    <name type="synonym">Brachydanio rerio</name>
    <dbReference type="NCBI Taxonomy" id="7955"/>
    <lineage>
        <taxon>Eukaryota</taxon>
        <taxon>Metazoa</taxon>
        <taxon>Chordata</taxon>
        <taxon>Craniata</taxon>
        <taxon>Vertebrata</taxon>
        <taxon>Euteleostomi</taxon>
        <taxon>Actinopterygii</taxon>
        <taxon>Neopterygii</taxon>
        <taxon>Teleostei</taxon>
        <taxon>Ostariophysi</taxon>
        <taxon>Cypriniformes</taxon>
        <taxon>Danionidae</taxon>
        <taxon>Danioninae</taxon>
        <taxon>Danio</taxon>
    </lineage>
</organism>
<protein>
    <recommendedName>
        <fullName>Homeobox protein unc-4 homolog</fullName>
    </recommendedName>
    <alternativeName>
        <fullName>Homeobox protein Uncx4.1</fullName>
    </alternativeName>
</protein>
<sequence length="470" mass="51726">MMDSRILEHPHAQFGGSLGSMVGMGFPYHLGHHHVYDISGHQLQSAAAVPFSIDGLLNGSCSGSVANSNPLLGSGCGVNGDSQYKLGDGGDPDKESPGCKRRRTRTNFTGWQLEELEKASNESHYPDVFMREALALRLDLVESRVQVWFQNRRAKWRKKENTKKGPGRPAHNSHPTTCSGEPMDPEEIARRELERLEKKKRKQERKLLKSQNKLLAGELFHTPGSDSDSGVSQSTDSESTPHTGPQHSAHRQQTEHICEQHARHQRASTVNETAEPMDSTRNSGLCPANGITRASTLQKLNPFSVESLLADSSPRRKTILDFSQLPPQRPLVGKGHFLLYPITQPLGFIVPQTAMKQSHDSGNSGHHCSTTDTSTSNQKNVNHLCRDNTGASDELQRETKNSSIQSPSTSSEKCFSESNSPQKESENDSESTVTNSSQKESISANLSEYSDRKSRSSADTNTDGEDVDMD</sequence>
<gene>
    <name type="primary">uncx</name>
    <name type="synonym">uncx4.1</name>
</gene>
<name>UNC4_DANRE</name>
<feature type="chain" id="PRO_0000334627" description="Homeobox protein unc-4 homolog">
    <location>
        <begin position="1"/>
        <end position="470"/>
    </location>
</feature>
<feature type="DNA-binding region" description="Homeobox" evidence="2">
    <location>
        <begin position="101"/>
        <end position="160"/>
    </location>
</feature>
<feature type="region of interest" description="Disordered" evidence="3">
    <location>
        <begin position="83"/>
        <end position="102"/>
    </location>
</feature>
<feature type="region of interest" description="Disordered" evidence="3">
    <location>
        <begin position="157"/>
        <end position="185"/>
    </location>
</feature>
<feature type="region of interest" description="Disordered" evidence="3">
    <location>
        <begin position="199"/>
        <end position="289"/>
    </location>
</feature>
<feature type="region of interest" description="Disordered" evidence="3">
    <location>
        <begin position="355"/>
        <end position="470"/>
    </location>
</feature>
<feature type="compositionally biased region" description="Polar residues" evidence="3">
    <location>
        <begin position="224"/>
        <end position="246"/>
    </location>
</feature>
<feature type="compositionally biased region" description="Basic and acidic residues" evidence="3">
    <location>
        <begin position="252"/>
        <end position="262"/>
    </location>
</feature>
<feature type="compositionally biased region" description="Polar residues" evidence="3">
    <location>
        <begin position="355"/>
        <end position="381"/>
    </location>
</feature>
<feature type="compositionally biased region" description="Polar residues" evidence="3">
    <location>
        <begin position="401"/>
        <end position="422"/>
    </location>
</feature>
<feature type="compositionally biased region" description="Polar residues" evidence="3">
    <location>
        <begin position="430"/>
        <end position="448"/>
    </location>
</feature>
<feature type="sequence conflict" description="In Ref. 1; AAX73253." evidence="5" ref="1">
    <original>S</original>
    <variation>G</variation>
    <location>
        <position position="20"/>
    </location>
</feature>
<feature type="sequence conflict" description="In Ref. 1; AAX73253." evidence="5" ref="1">
    <original>G</original>
    <variation>V</variation>
    <location>
        <position position="80"/>
    </location>
</feature>
<feature type="sequence conflict" description="In Ref. 1; AAX73253." evidence="5" ref="1">
    <original>S</original>
    <variation>F</variation>
    <location>
        <position position="120"/>
    </location>
</feature>
<evidence type="ECO:0000250" key="1"/>
<evidence type="ECO:0000255" key="2">
    <source>
        <dbReference type="PROSITE-ProRule" id="PRU00108"/>
    </source>
</evidence>
<evidence type="ECO:0000256" key="3">
    <source>
        <dbReference type="SAM" id="MobiDB-lite"/>
    </source>
</evidence>
<evidence type="ECO:0000269" key="4">
    <source>
    </source>
</evidence>
<evidence type="ECO:0000305" key="5"/>
<keyword id="KW-0217">Developmental protein</keyword>
<keyword id="KW-0221">Differentiation</keyword>
<keyword id="KW-0238">DNA-binding</keyword>
<keyword id="KW-0371">Homeobox</keyword>
<keyword id="KW-0524">Neurogenesis</keyword>
<keyword id="KW-0539">Nucleus</keyword>
<keyword id="KW-1185">Reference proteome</keyword>
<keyword id="KW-0804">Transcription</keyword>
<keyword id="KW-0805">Transcription regulation</keyword>
<comment type="function">
    <text evidence="1">Transcription factor involved in somitogenesis and neurogenesis.</text>
</comment>
<comment type="subcellular location">
    <subcellularLocation>
        <location evidence="2">Nucleus</location>
    </subcellularLocation>
</comment>
<comment type="tissue specificity">
    <text evidence="4">In the somite, it is restricted to the caudal half of the newly formed somite and sclerotome.</text>
</comment>
<comment type="miscellaneous">
    <text>Marker of antero-posterior subdivisions of the somite.</text>
</comment>
<comment type="similarity">
    <text evidence="5">Belongs to the paired homeobox family. Unc-4 subfamily.</text>
</comment>
<reference key="1">
    <citation type="journal article" date="2005" name="Nature">
        <title>Retinoic acid signalling links left-right asymmetric patterning and bilaterally symmetric somitogenesis in the zebrafish embryo.</title>
        <authorList>
            <person name="Kawakami Y."/>
            <person name="Raya A."/>
            <person name="Raya R.M."/>
            <person name="Rodriguez-Esteban C."/>
            <person name="Belmonte J.C."/>
        </authorList>
    </citation>
    <scope>NUCLEOTIDE SEQUENCE [MRNA]</scope>
    <scope>TISSUE SPECIFICITY</scope>
</reference>
<reference key="2">
    <citation type="submission" date="2006-05" db="EMBL/GenBank/DDBJ databases">
        <authorList>
            <consortium name="NIH - Zebrafish Gene Collection (ZGC) project"/>
        </authorList>
    </citation>
    <scope>NUCLEOTIDE SEQUENCE [LARGE SCALE MRNA]</scope>
    <source>
        <tissue>Olfactory epithelium</tissue>
    </source>
</reference>
<proteinExistence type="evidence at transcript level"/>